<gene>
    <name type="primary">Med20</name>
    <name type="synonym">Trfp</name>
</gene>
<feature type="chain" id="PRO_0000065732" description="Mediator of RNA polymerase II transcription subunit 20">
    <location>
        <begin position="1"/>
        <end position="212"/>
    </location>
</feature>
<feature type="splice variant" id="VSP_028987" description="In isoform 3." evidence="4">
    <original>QAGKLMYVMHN</original>
    <variation>NREEETQPVIM</variation>
    <location>
        <begin position="58"/>
        <end position="68"/>
    </location>
</feature>
<feature type="splice variant" id="VSP_028988" description="In isoform 3." evidence="4">
    <location>
        <begin position="69"/>
        <end position="212"/>
    </location>
</feature>
<feature type="splice variant" id="VSP_028989" description="In isoform 2." evidence="3">
    <original>EYG</original>
    <variation>RPW</variation>
    <location>
        <begin position="143"/>
        <end position="145"/>
    </location>
</feature>
<feature type="splice variant" id="VSP_028990" description="In isoform 2." evidence="3">
    <location>
        <begin position="146"/>
        <end position="212"/>
    </location>
</feature>
<protein>
    <recommendedName>
        <fullName>Mediator of RNA polymerase II transcription subunit 20</fullName>
    </recommendedName>
    <alternativeName>
        <fullName>Mediator complex subunit 20</fullName>
    </alternativeName>
    <alternativeName>
        <fullName>TRF-proximal protein homolog</fullName>
    </alternativeName>
</protein>
<comment type="function">
    <text evidence="1">Component of the Mediator complex, a coactivator involved in the regulated transcription of nearly all RNA polymerase II-dependent genes. Mediator functions as a bridge to convey information from gene-specific regulatory proteins to the basal RNA polymerase II transcription machinery. Mediator is recruited to promoters by direct interactions with regulatory proteins and serves as a scaffold for the assembly of a functional preinitiation complex with RNA polymerase II and the general transcription factors (By similarity).</text>
</comment>
<comment type="subunit">
    <text evidence="1 2">Component of the Mediator complex, which is composed of MED1, MED4, MED6, MED7, MED8, MED9, MED10, MED11, MED12, MED13, MED13L, MED14, MED15, MED16, MED17, MED18, MED19, MED20, MED21, MED22, MED23, MED24, MED25, MED26, MED27, MED29, MED30, MED31, CCNC, CDK8 and CDC2L6/CDK11. The MED12, MED13, CCNC and CDK8 subunits form a distinct module termed the CDK8 module. Mediator containing the CDK8 module is less active than Mediator lacking this module in supporting transcriptional activation. Individual preparations of the Mediator complex lacking one or more distinct subunits have been variously termed ARC, CRSP, DRIP, PC2, SMCC and TRAP (By similarity). Interacts with PPARG.</text>
</comment>
<comment type="interaction">
    <interactant intactId="EBI-398698">
        <id>Q9R0X0</id>
    </interactant>
    <interactant intactId="EBI-309220">
        <id>Q9CQI9</id>
        <label>Med30</label>
    </interactant>
    <organismsDiffer>false</organismsDiffer>
    <experiments>2</experiments>
</comment>
<comment type="interaction">
    <interactant intactId="EBI-398698">
        <id>Q9R0X0</id>
    </interactant>
    <interactant intactId="EBI-7990252">
        <id>Q9D7W5</id>
        <label>Med8</label>
    </interactant>
    <organismsDiffer>false</organismsDiffer>
    <experiments>2</experiments>
</comment>
<comment type="interaction">
    <interactant intactId="EBI-398698">
        <id>Q9R0X0</id>
    </interactant>
    <interactant intactId="EBI-394640">
        <id>Q9BUE0</id>
        <label>MED18</label>
    </interactant>
    <organismsDiffer>true</organismsDiffer>
    <experiments>6</experiments>
</comment>
<comment type="interaction">
    <interactant intactId="EBI-398698">
        <id>Q9R0X0</id>
    </interactant>
    <interactant intactId="EBI-394603">
        <id>Q6P2C8</id>
        <label>MED27</label>
    </interactant>
    <organismsDiffer>true</organismsDiffer>
    <experiments>2</experiments>
</comment>
<comment type="interaction">
    <interactant intactId="EBI-398698">
        <id>Q9R0X0</id>
    </interactant>
    <interactant intactId="EBI-394656">
        <id>Q9NX70</id>
        <label>MED29</label>
    </interactant>
    <organismsDiffer>true</organismsDiffer>
    <experiments>2</experiments>
</comment>
<comment type="interaction">
    <interactant intactId="EBI-398698">
        <id>Q9R0X0</id>
    </interactant>
    <interactant intactId="EBI-394624">
        <id>O75586</id>
        <label>MED6</label>
    </interactant>
    <organismsDiffer>true</organismsDiffer>
    <experiments>2</experiments>
</comment>
<comment type="subcellular location">
    <subcellularLocation>
        <location evidence="5">Nucleus</location>
    </subcellularLocation>
</comment>
<comment type="alternative products">
    <event type="alternative splicing"/>
    <isoform>
        <id>Q9R0X0-1</id>
        <name>1</name>
        <sequence type="displayed"/>
    </isoform>
    <isoform>
        <id>Q9R0X0-2</id>
        <name>2</name>
        <sequence type="described" ref="VSP_028989 VSP_028990"/>
    </isoform>
    <isoform>
        <id>Q9R0X0-3</id>
        <name>3</name>
        <sequence type="described" ref="VSP_028987 VSP_028988"/>
    </isoform>
</comment>
<comment type="similarity">
    <text evidence="5">Belongs to the Mediator complex subunit 20 family.</text>
</comment>
<organism>
    <name type="scientific">Mus musculus</name>
    <name type="common">Mouse</name>
    <dbReference type="NCBI Taxonomy" id="10090"/>
    <lineage>
        <taxon>Eukaryota</taxon>
        <taxon>Metazoa</taxon>
        <taxon>Chordata</taxon>
        <taxon>Craniata</taxon>
        <taxon>Vertebrata</taxon>
        <taxon>Euteleostomi</taxon>
        <taxon>Mammalia</taxon>
        <taxon>Eutheria</taxon>
        <taxon>Euarchontoglires</taxon>
        <taxon>Glires</taxon>
        <taxon>Rodentia</taxon>
        <taxon>Myomorpha</taxon>
        <taxon>Muroidea</taxon>
        <taxon>Muridae</taxon>
        <taxon>Murinae</taxon>
        <taxon>Mus</taxon>
        <taxon>Mus</taxon>
    </lineage>
</organism>
<evidence type="ECO:0000250" key="1"/>
<evidence type="ECO:0000269" key="2">
    <source>
    </source>
</evidence>
<evidence type="ECO:0000303" key="3">
    <source>
    </source>
</evidence>
<evidence type="ECO:0000303" key="4">
    <source>
    </source>
</evidence>
<evidence type="ECO:0000305" key="5"/>
<accession>Q9R0X0</accession>
<accession>Q3UJQ7</accession>
<accession>Q3V418</accession>
<accession>Q6PAR6</accession>
<keyword id="KW-0002">3D-structure</keyword>
<keyword id="KW-0010">Activator</keyword>
<keyword id="KW-0025">Alternative splicing</keyword>
<keyword id="KW-0539">Nucleus</keyword>
<keyword id="KW-1185">Reference proteome</keyword>
<keyword id="KW-0804">Transcription</keyword>
<keyword id="KW-0805">Transcription regulation</keyword>
<reference key="1">
    <citation type="submission" date="1999-08" db="EMBL/GenBank/DDBJ databases">
        <authorList>
            <person name="Crowley T.E."/>
        </authorList>
    </citation>
    <scope>NUCLEOTIDE SEQUENCE [MRNA] (ISOFORM 1)</scope>
</reference>
<reference key="2">
    <citation type="journal article" date="2005" name="Science">
        <title>The transcriptional landscape of the mammalian genome.</title>
        <authorList>
            <person name="Carninci P."/>
            <person name="Kasukawa T."/>
            <person name="Katayama S."/>
            <person name="Gough J."/>
            <person name="Frith M.C."/>
            <person name="Maeda N."/>
            <person name="Oyama R."/>
            <person name="Ravasi T."/>
            <person name="Lenhard B."/>
            <person name="Wells C."/>
            <person name="Kodzius R."/>
            <person name="Shimokawa K."/>
            <person name="Bajic V.B."/>
            <person name="Brenner S.E."/>
            <person name="Batalov S."/>
            <person name="Forrest A.R."/>
            <person name="Zavolan M."/>
            <person name="Davis M.J."/>
            <person name="Wilming L.G."/>
            <person name="Aidinis V."/>
            <person name="Allen J.E."/>
            <person name="Ambesi-Impiombato A."/>
            <person name="Apweiler R."/>
            <person name="Aturaliya R.N."/>
            <person name="Bailey T.L."/>
            <person name="Bansal M."/>
            <person name="Baxter L."/>
            <person name="Beisel K.W."/>
            <person name="Bersano T."/>
            <person name="Bono H."/>
            <person name="Chalk A.M."/>
            <person name="Chiu K.P."/>
            <person name="Choudhary V."/>
            <person name="Christoffels A."/>
            <person name="Clutterbuck D.R."/>
            <person name="Crowe M.L."/>
            <person name="Dalla E."/>
            <person name="Dalrymple B.P."/>
            <person name="de Bono B."/>
            <person name="Della Gatta G."/>
            <person name="di Bernardo D."/>
            <person name="Down T."/>
            <person name="Engstrom P."/>
            <person name="Fagiolini M."/>
            <person name="Faulkner G."/>
            <person name="Fletcher C.F."/>
            <person name="Fukushima T."/>
            <person name="Furuno M."/>
            <person name="Futaki S."/>
            <person name="Gariboldi M."/>
            <person name="Georgii-Hemming P."/>
            <person name="Gingeras T.R."/>
            <person name="Gojobori T."/>
            <person name="Green R.E."/>
            <person name="Gustincich S."/>
            <person name="Harbers M."/>
            <person name="Hayashi Y."/>
            <person name="Hensch T.K."/>
            <person name="Hirokawa N."/>
            <person name="Hill D."/>
            <person name="Huminiecki L."/>
            <person name="Iacono M."/>
            <person name="Ikeo K."/>
            <person name="Iwama A."/>
            <person name="Ishikawa T."/>
            <person name="Jakt M."/>
            <person name="Kanapin A."/>
            <person name="Katoh M."/>
            <person name="Kawasawa Y."/>
            <person name="Kelso J."/>
            <person name="Kitamura H."/>
            <person name="Kitano H."/>
            <person name="Kollias G."/>
            <person name="Krishnan S.P."/>
            <person name="Kruger A."/>
            <person name="Kummerfeld S.K."/>
            <person name="Kurochkin I.V."/>
            <person name="Lareau L.F."/>
            <person name="Lazarevic D."/>
            <person name="Lipovich L."/>
            <person name="Liu J."/>
            <person name="Liuni S."/>
            <person name="McWilliam S."/>
            <person name="Madan Babu M."/>
            <person name="Madera M."/>
            <person name="Marchionni L."/>
            <person name="Matsuda H."/>
            <person name="Matsuzawa S."/>
            <person name="Miki H."/>
            <person name="Mignone F."/>
            <person name="Miyake S."/>
            <person name="Morris K."/>
            <person name="Mottagui-Tabar S."/>
            <person name="Mulder N."/>
            <person name="Nakano N."/>
            <person name="Nakauchi H."/>
            <person name="Ng P."/>
            <person name="Nilsson R."/>
            <person name="Nishiguchi S."/>
            <person name="Nishikawa S."/>
            <person name="Nori F."/>
            <person name="Ohara O."/>
            <person name="Okazaki Y."/>
            <person name="Orlando V."/>
            <person name="Pang K.C."/>
            <person name="Pavan W.J."/>
            <person name="Pavesi G."/>
            <person name="Pesole G."/>
            <person name="Petrovsky N."/>
            <person name="Piazza S."/>
            <person name="Reed J."/>
            <person name="Reid J.F."/>
            <person name="Ring B.Z."/>
            <person name="Ringwald M."/>
            <person name="Rost B."/>
            <person name="Ruan Y."/>
            <person name="Salzberg S.L."/>
            <person name="Sandelin A."/>
            <person name="Schneider C."/>
            <person name="Schoenbach C."/>
            <person name="Sekiguchi K."/>
            <person name="Semple C.A."/>
            <person name="Seno S."/>
            <person name="Sessa L."/>
            <person name="Sheng Y."/>
            <person name="Shibata Y."/>
            <person name="Shimada H."/>
            <person name="Shimada K."/>
            <person name="Silva D."/>
            <person name="Sinclair B."/>
            <person name="Sperling S."/>
            <person name="Stupka E."/>
            <person name="Sugiura K."/>
            <person name="Sultana R."/>
            <person name="Takenaka Y."/>
            <person name="Taki K."/>
            <person name="Tammoja K."/>
            <person name="Tan S.L."/>
            <person name="Tang S."/>
            <person name="Taylor M.S."/>
            <person name="Tegner J."/>
            <person name="Teichmann S.A."/>
            <person name="Ueda H.R."/>
            <person name="van Nimwegen E."/>
            <person name="Verardo R."/>
            <person name="Wei C.L."/>
            <person name="Yagi K."/>
            <person name="Yamanishi H."/>
            <person name="Zabarovsky E."/>
            <person name="Zhu S."/>
            <person name="Zimmer A."/>
            <person name="Hide W."/>
            <person name="Bult C."/>
            <person name="Grimmond S.M."/>
            <person name="Teasdale R.D."/>
            <person name="Liu E.T."/>
            <person name="Brusic V."/>
            <person name="Quackenbush J."/>
            <person name="Wahlestedt C."/>
            <person name="Mattick J.S."/>
            <person name="Hume D.A."/>
            <person name="Kai C."/>
            <person name="Sasaki D."/>
            <person name="Tomaru Y."/>
            <person name="Fukuda S."/>
            <person name="Kanamori-Katayama M."/>
            <person name="Suzuki M."/>
            <person name="Aoki J."/>
            <person name="Arakawa T."/>
            <person name="Iida J."/>
            <person name="Imamura K."/>
            <person name="Itoh M."/>
            <person name="Kato T."/>
            <person name="Kawaji H."/>
            <person name="Kawagashira N."/>
            <person name="Kawashima T."/>
            <person name="Kojima M."/>
            <person name="Kondo S."/>
            <person name="Konno H."/>
            <person name="Nakano K."/>
            <person name="Ninomiya N."/>
            <person name="Nishio T."/>
            <person name="Okada M."/>
            <person name="Plessy C."/>
            <person name="Shibata K."/>
            <person name="Shiraki T."/>
            <person name="Suzuki S."/>
            <person name="Tagami M."/>
            <person name="Waki K."/>
            <person name="Watahiki A."/>
            <person name="Okamura-Oho Y."/>
            <person name="Suzuki H."/>
            <person name="Kawai J."/>
            <person name="Hayashizaki Y."/>
        </authorList>
    </citation>
    <scope>NUCLEOTIDE SEQUENCE [LARGE SCALE MRNA] (ISOFORMS 1 AND 3)</scope>
    <source>
        <strain>C57BL/6J</strain>
        <strain>DBA/2J</strain>
        <tissue>Cerebellum</tissue>
    </source>
</reference>
<reference key="3">
    <citation type="journal article" date="2004" name="Genome Res.">
        <title>The status, quality, and expansion of the NIH full-length cDNA project: the Mammalian Gene Collection (MGC).</title>
        <authorList>
            <consortium name="The MGC Project Team"/>
        </authorList>
    </citation>
    <scope>NUCLEOTIDE SEQUENCE [LARGE SCALE MRNA] (ISOFORM 2)</scope>
    <source>
        <strain>C57BL/6J</strain>
        <tissue>Brain</tissue>
    </source>
</reference>
<reference key="4">
    <citation type="journal article" date="2002" name="Nature">
        <title>Transcription coactivator TRAP220 is required for PPAR gamma 2-stimulated adipogenesis.</title>
        <authorList>
            <person name="Ge K."/>
            <person name="Guermah M."/>
            <person name="Yuan C.-X."/>
            <person name="Ito M."/>
            <person name="Wallberg A.E."/>
            <person name="Spiegelman B.M."/>
            <person name="Roeder R.G."/>
        </authorList>
    </citation>
    <scope>INTERACTION WITH PPARG</scope>
</reference>
<reference key="5">
    <citation type="journal article" date="2010" name="Cell">
        <title>A tissue-specific atlas of mouse protein phosphorylation and expression.</title>
        <authorList>
            <person name="Huttlin E.L."/>
            <person name="Jedrychowski M.P."/>
            <person name="Elias J.E."/>
            <person name="Goswami T."/>
            <person name="Rad R."/>
            <person name="Beausoleil S.A."/>
            <person name="Villen J."/>
            <person name="Haas W."/>
            <person name="Sowa M.E."/>
            <person name="Gygi S.P."/>
        </authorList>
    </citation>
    <scope>IDENTIFICATION BY MASS SPECTROMETRY [LARGE SCALE ANALYSIS]</scope>
    <source>
        <tissue>Lung</tissue>
        <tissue>Spleen</tissue>
        <tissue>Testis</tissue>
    </source>
</reference>
<dbReference type="EMBL" id="AJ245617">
    <property type="protein sequence ID" value="CAB53514.1"/>
    <property type="molecule type" value="mRNA"/>
</dbReference>
<dbReference type="EMBL" id="AK019130">
    <property type="protein sequence ID" value="BAE43254.1"/>
    <property type="molecule type" value="mRNA"/>
</dbReference>
<dbReference type="EMBL" id="AK043396">
    <property type="protein sequence ID" value="BAC31536.1"/>
    <property type="molecule type" value="mRNA"/>
</dbReference>
<dbReference type="EMBL" id="AK146345">
    <property type="protein sequence ID" value="BAE27098.1"/>
    <property type="molecule type" value="mRNA"/>
</dbReference>
<dbReference type="EMBL" id="BC060122">
    <property type="protein sequence ID" value="AAH60122.1"/>
    <property type="molecule type" value="mRNA"/>
</dbReference>
<dbReference type="CCDS" id="CCDS28851.1">
    <molecule id="Q9R0X0-1"/>
</dbReference>
<dbReference type="RefSeq" id="NP_001351855.1">
    <molecule id="Q9R0X0-2"/>
    <property type="nucleotide sequence ID" value="NM_001364926.1"/>
</dbReference>
<dbReference type="RefSeq" id="NP_064432.1">
    <molecule id="Q9R0X0-1"/>
    <property type="nucleotide sequence ID" value="NM_020048.4"/>
</dbReference>
<dbReference type="PDB" id="6W1S">
    <property type="method" value="EM"/>
    <property type="resolution" value="4.02 A"/>
    <property type="chains" value="O=3-200"/>
</dbReference>
<dbReference type="PDB" id="8T1I">
    <property type="method" value="EM"/>
    <property type="resolution" value="4.68 A"/>
    <property type="chains" value="O=1-212"/>
</dbReference>
<dbReference type="PDB" id="8T1L">
    <property type="method" value="EM"/>
    <property type="resolution" value="4.83 A"/>
    <property type="chains" value="O=1-212"/>
</dbReference>
<dbReference type="PDBsum" id="6W1S"/>
<dbReference type="PDBsum" id="8T1I"/>
<dbReference type="PDBsum" id="8T1L"/>
<dbReference type="EMDB" id="EMD-21514"/>
<dbReference type="EMDB" id="EMD-40968"/>
<dbReference type="EMDB" id="EMD-40971"/>
<dbReference type="SMR" id="Q9R0X0"/>
<dbReference type="BioGRID" id="208167">
    <property type="interactions" value="4"/>
</dbReference>
<dbReference type="ComplexPortal" id="CPX-3264">
    <property type="entry name" value="Core mediator complex"/>
</dbReference>
<dbReference type="CORUM" id="Q9R0X0"/>
<dbReference type="FunCoup" id="Q9R0X0">
    <property type="interactions" value="4198"/>
</dbReference>
<dbReference type="IntAct" id="Q9R0X0">
    <property type="interactions" value="13"/>
</dbReference>
<dbReference type="MINT" id="Q9R0X0"/>
<dbReference type="STRING" id="10090.ENSMUSP00000024778"/>
<dbReference type="iPTMnet" id="Q9R0X0"/>
<dbReference type="PhosphoSitePlus" id="Q9R0X0"/>
<dbReference type="SwissPalm" id="Q9R0X0"/>
<dbReference type="PaxDb" id="10090-ENSMUSP00000024778"/>
<dbReference type="PeptideAtlas" id="Q9R0X0"/>
<dbReference type="ProteomicsDB" id="292188">
    <molecule id="Q9R0X0-1"/>
</dbReference>
<dbReference type="ProteomicsDB" id="292189">
    <molecule id="Q9R0X0-2"/>
</dbReference>
<dbReference type="ProteomicsDB" id="292190">
    <molecule id="Q9R0X0-3"/>
</dbReference>
<dbReference type="Pumba" id="Q9R0X0"/>
<dbReference type="DNASU" id="56771"/>
<dbReference type="Ensembl" id="ENSMUST00000024778.3">
    <molecule id="Q9R0X0-1"/>
    <property type="protein sequence ID" value="ENSMUSP00000024778.3"/>
    <property type="gene ID" value="ENSMUSG00000092558.4"/>
</dbReference>
<dbReference type="GeneID" id="56771"/>
<dbReference type="KEGG" id="mmu:56771"/>
<dbReference type="UCSC" id="uc008cvr.1">
    <molecule id="Q9R0X0-2"/>
    <property type="organism name" value="mouse"/>
</dbReference>
<dbReference type="UCSC" id="uc008cvs.1">
    <molecule id="Q9R0X0-1"/>
    <property type="organism name" value="mouse"/>
</dbReference>
<dbReference type="AGR" id="MGI:1929648"/>
<dbReference type="CTD" id="9477"/>
<dbReference type="MGI" id="MGI:1929648">
    <property type="gene designation" value="Med20"/>
</dbReference>
<dbReference type="VEuPathDB" id="HostDB:ENSMUSG00000092558"/>
<dbReference type="eggNOG" id="KOG4309">
    <property type="taxonomic scope" value="Eukaryota"/>
</dbReference>
<dbReference type="GeneTree" id="ENSGT00390000002060"/>
<dbReference type="HOGENOM" id="CLU_080044_1_0_1"/>
<dbReference type="InParanoid" id="Q9R0X0"/>
<dbReference type="OMA" id="FFVDCET"/>
<dbReference type="OrthoDB" id="1854899at2759"/>
<dbReference type="PhylomeDB" id="Q9R0X0"/>
<dbReference type="TreeFam" id="TF315156"/>
<dbReference type="BioGRID-ORCS" id="56771">
    <property type="hits" value="27 hits in 76 CRISPR screens"/>
</dbReference>
<dbReference type="ChiTaRS" id="Med20">
    <property type="organism name" value="mouse"/>
</dbReference>
<dbReference type="PRO" id="PR:Q9R0X0"/>
<dbReference type="Proteomes" id="UP000000589">
    <property type="component" value="Chromosome 17"/>
</dbReference>
<dbReference type="RNAct" id="Q9R0X0">
    <property type="molecule type" value="protein"/>
</dbReference>
<dbReference type="Bgee" id="ENSMUSG00000092558">
    <property type="expression patterns" value="Expressed in paneth cell and 267 other cell types or tissues"/>
</dbReference>
<dbReference type="GO" id="GO:0070847">
    <property type="term" value="C:core mediator complex"/>
    <property type="evidence" value="ECO:0000266"/>
    <property type="project" value="ComplexPortal"/>
</dbReference>
<dbReference type="GO" id="GO:0016592">
    <property type="term" value="C:mediator complex"/>
    <property type="evidence" value="ECO:0000314"/>
    <property type="project" value="MGI"/>
</dbReference>
<dbReference type="GO" id="GO:0005654">
    <property type="term" value="C:nucleoplasm"/>
    <property type="evidence" value="ECO:0000304"/>
    <property type="project" value="Reactome"/>
</dbReference>
<dbReference type="GO" id="GO:0005634">
    <property type="term" value="C:nucleus"/>
    <property type="evidence" value="ECO:0000266"/>
    <property type="project" value="ComplexPortal"/>
</dbReference>
<dbReference type="GO" id="GO:0003712">
    <property type="term" value="F:transcription coregulator activity"/>
    <property type="evidence" value="ECO:0007669"/>
    <property type="project" value="InterPro"/>
</dbReference>
<dbReference type="GO" id="GO:0032968">
    <property type="term" value="P:positive regulation of transcription elongation by RNA polymerase II"/>
    <property type="evidence" value="ECO:0000303"/>
    <property type="project" value="ComplexPortal"/>
</dbReference>
<dbReference type="GO" id="GO:0060261">
    <property type="term" value="P:positive regulation of transcription initiation by RNA polymerase II"/>
    <property type="evidence" value="ECO:0000303"/>
    <property type="project" value="ComplexPortal"/>
</dbReference>
<dbReference type="GO" id="GO:0051123">
    <property type="term" value="P:RNA polymerase II preinitiation complex assembly"/>
    <property type="evidence" value="ECO:0000303"/>
    <property type="project" value="ComplexPortal"/>
</dbReference>
<dbReference type="GO" id="GO:0035914">
    <property type="term" value="P:skeletal muscle cell differentiation"/>
    <property type="evidence" value="ECO:0000315"/>
    <property type="project" value="MGI"/>
</dbReference>
<dbReference type="InterPro" id="IPR013921">
    <property type="entry name" value="Mediator_Med20"/>
</dbReference>
<dbReference type="PANTHER" id="PTHR12465:SF0">
    <property type="entry name" value="MEDIATOR OF RNA POLYMERASE II TRANSCRIPTION SUBUNIT 20"/>
    <property type="match status" value="1"/>
</dbReference>
<dbReference type="PANTHER" id="PTHR12465">
    <property type="entry name" value="UBIQUITIN SPECIFIC PROTEASE HOMOLOG 49"/>
    <property type="match status" value="1"/>
</dbReference>
<dbReference type="Pfam" id="PF08612">
    <property type="entry name" value="Med20"/>
    <property type="match status" value="1"/>
</dbReference>
<sequence>MGVTCVSQMPVAEGKSLQQTVELLTKKLEMLGAEKQGTFCVDCETYHTAASTLGSQGQAGKLMYVMHNSEYPLSCFALFENGPCLIADTNFDVLMVKLKGFFQSAKASKIETRGTRYQYCDFLVKVGTVTMGPSARGISVEVEYGPCVVASDCWSLLLEFLQSFLGSHAPGAPTVFGNRHDAVYGPADTMIQYMELFNKIRKQQQVPVAGIR</sequence>
<proteinExistence type="evidence at protein level"/>
<name>MED20_MOUSE</name>